<protein>
    <recommendedName>
        <fullName>Ferric reduction oxidase 5</fullName>
        <shortName>AtFRO5</shortName>
        <ecNumber>1.16.1.7</ecNumber>
    </recommendedName>
    <alternativeName>
        <fullName>Ferric-chelate reductase 5</fullName>
    </alternativeName>
</protein>
<evidence type="ECO:0000250" key="1"/>
<evidence type="ECO:0000255" key="2"/>
<evidence type="ECO:0000255" key="3">
    <source>
        <dbReference type="PROSITE-ProRule" id="PRU00716"/>
    </source>
</evidence>
<evidence type="ECO:0000256" key="4">
    <source>
        <dbReference type="SAM" id="MobiDB-lite"/>
    </source>
</evidence>
<evidence type="ECO:0000269" key="5">
    <source>
    </source>
</evidence>
<evidence type="ECO:0000269" key="6">
    <source>
    </source>
</evidence>
<evidence type="ECO:0000269" key="7">
    <source>
    </source>
</evidence>
<evidence type="ECO:0000305" key="8"/>
<gene>
    <name type="primary">FRO5</name>
    <name type="ordered locus">At5g23990</name>
    <name type="ORF">MZF18.13</name>
</gene>
<dbReference type="EC" id="1.16.1.7"/>
<dbReference type="EMBL" id="AB009056">
    <property type="protein sequence ID" value="BAB08722.1"/>
    <property type="molecule type" value="Genomic_DNA"/>
</dbReference>
<dbReference type="EMBL" id="CP002688">
    <property type="protein sequence ID" value="AED93243.1"/>
    <property type="molecule type" value="Genomic_DNA"/>
</dbReference>
<dbReference type="RefSeq" id="NP_197787.1">
    <molecule id="Q9FLW2-2"/>
    <property type="nucleotide sequence ID" value="NM_122304.1"/>
</dbReference>
<dbReference type="SMR" id="Q9FLW2"/>
<dbReference type="BioGRID" id="17739">
    <property type="interactions" value="2"/>
</dbReference>
<dbReference type="FunCoup" id="Q9FLW2">
    <property type="interactions" value="47"/>
</dbReference>
<dbReference type="STRING" id="3702.Q9FLW2"/>
<dbReference type="ProteomicsDB" id="230045">
    <molecule id="Q9FLW2-1"/>
</dbReference>
<dbReference type="EnsemblPlants" id="AT5G23990.1">
    <molecule id="Q9FLW2-2"/>
    <property type="protein sequence ID" value="AT5G23990.1"/>
    <property type="gene ID" value="AT5G23990"/>
</dbReference>
<dbReference type="GeneID" id="832464"/>
<dbReference type="Gramene" id="AT5G23990.1">
    <molecule id="Q9FLW2-2"/>
    <property type="protein sequence ID" value="AT5G23990.1"/>
    <property type="gene ID" value="AT5G23990"/>
</dbReference>
<dbReference type="KEGG" id="ath:AT5G23990"/>
<dbReference type="Araport" id="AT5G23990"/>
<dbReference type="TAIR" id="AT5G23990">
    <property type="gene designation" value="FRO5"/>
</dbReference>
<dbReference type="InParanoid" id="Q9FLW2"/>
<dbReference type="PhylomeDB" id="Q9FLW2"/>
<dbReference type="BioCyc" id="ARA:AT5G23990-MONOMER"/>
<dbReference type="BRENDA" id="1.16.1.10">
    <property type="organism ID" value="399"/>
</dbReference>
<dbReference type="PRO" id="PR:Q9FLW2"/>
<dbReference type="Proteomes" id="UP000006548">
    <property type="component" value="Chromosome 5"/>
</dbReference>
<dbReference type="ExpressionAtlas" id="Q9FLW2">
    <property type="expression patterns" value="baseline and differential"/>
</dbReference>
<dbReference type="GO" id="GO:0005886">
    <property type="term" value="C:plasma membrane"/>
    <property type="evidence" value="ECO:0007669"/>
    <property type="project" value="UniProtKB-SubCell"/>
</dbReference>
<dbReference type="GO" id="GO:0140618">
    <property type="term" value="F:ferric-chelate reductase (NADH) activity"/>
    <property type="evidence" value="ECO:0007669"/>
    <property type="project" value="UniProtKB-EC"/>
</dbReference>
<dbReference type="GO" id="GO:0000293">
    <property type="term" value="F:ferric-chelate reductase activity"/>
    <property type="evidence" value="ECO:0000314"/>
    <property type="project" value="TAIR"/>
</dbReference>
<dbReference type="GO" id="GO:0046872">
    <property type="term" value="F:metal ion binding"/>
    <property type="evidence" value="ECO:0007669"/>
    <property type="project" value="UniProtKB-KW"/>
</dbReference>
<dbReference type="GO" id="GO:0006811">
    <property type="term" value="P:monoatomic ion transport"/>
    <property type="evidence" value="ECO:0007669"/>
    <property type="project" value="UniProtKB-KW"/>
</dbReference>
<dbReference type="CDD" id="cd06186">
    <property type="entry name" value="NOX_Duox_like_FAD_NADP"/>
    <property type="match status" value="1"/>
</dbReference>
<dbReference type="FunFam" id="3.40.50.80:FF:000039">
    <property type="entry name" value="Ferric reduction oxidase 3"/>
    <property type="match status" value="1"/>
</dbReference>
<dbReference type="FunFam" id="3.40.50.80:FF:000048">
    <property type="entry name" value="Ferric reduction oxidase 5"/>
    <property type="match status" value="1"/>
</dbReference>
<dbReference type="Gene3D" id="3.40.50.80">
    <property type="entry name" value="Nucleotide-binding domain of ferredoxin-NADP reductase (FNR) module"/>
    <property type="match status" value="2"/>
</dbReference>
<dbReference type="InterPro" id="IPR000778">
    <property type="entry name" value="Cyt_b245_heavy_chain"/>
</dbReference>
<dbReference type="InterPro" id="IPR013112">
    <property type="entry name" value="FAD-bd_8"/>
</dbReference>
<dbReference type="InterPro" id="IPR017927">
    <property type="entry name" value="FAD-bd_FR_type"/>
</dbReference>
<dbReference type="InterPro" id="IPR013130">
    <property type="entry name" value="Fe3_Rdtase_TM_dom"/>
</dbReference>
<dbReference type="InterPro" id="IPR013121">
    <property type="entry name" value="Fe_red_NAD-bd_6"/>
</dbReference>
<dbReference type="InterPro" id="IPR039261">
    <property type="entry name" value="FNR_nucleotide-bd"/>
</dbReference>
<dbReference type="InterPro" id="IPR050369">
    <property type="entry name" value="RBOH/FRE"/>
</dbReference>
<dbReference type="InterPro" id="IPR017938">
    <property type="entry name" value="Riboflavin_synthase-like_b-brl"/>
</dbReference>
<dbReference type="PANTHER" id="PTHR11972:SF79">
    <property type="entry name" value="FERRIC REDUCTION OXIDASE 4-RELATED"/>
    <property type="match status" value="1"/>
</dbReference>
<dbReference type="PANTHER" id="PTHR11972">
    <property type="entry name" value="NADPH OXIDASE"/>
    <property type="match status" value="1"/>
</dbReference>
<dbReference type="Pfam" id="PF08022">
    <property type="entry name" value="FAD_binding_8"/>
    <property type="match status" value="1"/>
</dbReference>
<dbReference type="Pfam" id="PF01794">
    <property type="entry name" value="Ferric_reduct"/>
    <property type="match status" value="1"/>
</dbReference>
<dbReference type="Pfam" id="PF08030">
    <property type="entry name" value="NAD_binding_6"/>
    <property type="match status" value="1"/>
</dbReference>
<dbReference type="PRINTS" id="PR00466">
    <property type="entry name" value="GP91PHOX"/>
</dbReference>
<dbReference type="SFLD" id="SFLDS00052">
    <property type="entry name" value="Ferric_Reductase_Domain"/>
    <property type="match status" value="1"/>
</dbReference>
<dbReference type="SFLD" id="SFLDG01168">
    <property type="entry name" value="Ferric_reductase_subgroup_(FRE"/>
    <property type="match status" value="1"/>
</dbReference>
<dbReference type="SUPFAM" id="SSF52343">
    <property type="entry name" value="Ferredoxin reductase-like, C-terminal NADP-linked domain"/>
    <property type="match status" value="1"/>
</dbReference>
<dbReference type="SUPFAM" id="SSF63380">
    <property type="entry name" value="Riboflavin synthase domain-like"/>
    <property type="match status" value="1"/>
</dbReference>
<dbReference type="PROSITE" id="PS51384">
    <property type="entry name" value="FAD_FR"/>
    <property type="match status" value="1"/>
</dbReference>
<organism>
    <name type="scientific">Arabidopsis thaliana</name>
    <name type="common">Mouse-ear cress</name>
    <dbReference type="NCBI Taxonomy" id="3702"/>
    <lineage>
        <taxon>Eukaryota</taxon>
        <taxon>Viridiplantae</taxon>
        <taxon>Streptophyta</taxon>
        <taxon>Embryophyta</taxon>
        <taxon>Tracheophyta</taxon>
        <taxon>Spermatophyta</taxon>
        <taxon>Magnoliopsida</taxon>
        <taxon>eudicotyledons</taxon>
        <taxon>Gunneridae</taxon>
        <taxon>Pentapetalae</taxon>
        <taxon>rosids</taxon>
        <taxon>malvids</taxon>
        <taxon>Brassicales</taxon>
        <taxon>Brassicaceae</taxon>
        <taxon>Camelineae</taxon>
        <taxon>Arabidopsis</taxon>
    </lineage>
</organism>
<accession>Q9FLW2</accession>
<accession>F4KFN9</accession>
<proteinExistence type="evidence at transcript level"/>
<name>FRO5_ARATH</name>
<comment type="function">
    <text evidence="5 7">Ferric chelate reductase probably involved in iron reduction in shoots. May participate in the transport of electrons to a Fe(3+) ion via FAD and heme intermediates. May act in iron metabolism in reproductive organs (PubMed:16006655). May function as root surface cupric chelate reductase and participate in the reduction of Cu(2+), for Cu(+) acquisition via Cu(+) transporters in response to copper deficiency (PubMed:22374396).</text>
</comment>
<comment type="catalytic activity">
    <reaction>
        <text>2 a Fe(II)-siderophore + NAD(+) + H(+) = 2 a Fe(III)-siderophore + NADH</text>
        <dbReference type="Rhea" id="RHEA:15061"/>
        <dbReference type="Rhea" id="RHEA-COMP:11342"/>
        <dbReference type="Rhea" id="RHEA-COMP:11344"/>
        <dbReference type="ChEBI" id="CHEBI:15378"/>
        <dbReference type="ChEBI" id="CHEBI:29033"/>
        <dbReference type="ChEBI" id="CHEBI:29034"/>
        <dbReference type="ChEBI" id="CHEBI:57540"/>
        <dbReference type="ChEBI" id="CHEBI:57945"/>
        <dbReference type="EC" id="1.16.1.7"/>
    </reaction>
</comment>
<comment type="cofactor">
    <cofactor evidence="8">
        <name>FAD</name>
        <dbReference type="ChEBI" id="CHEBI:57692"/>
    </cofactor>
</comment>
<comment type="subcellular location">
    <subcellularLocation>
        <location evidence="8">Cell membrane</location>
        <topology evidence="8">Multi-pass membrane protein</topology>
    </subcellularLocation>
</comment>
<comment type="alternative products">
    <event type="alternative splicing"/>
    <isoform>
        <id>Q9FLW2-1</id>
        <name>1</name>
        <sequence type="displayed"/>
    </isoform>
    <isoform>
        <id>Q9FLW2-2</id>
        <name>2</name>
        <sequence type="described" ref="VSP_041874"/>
    </isoform>
</comment>
<comment type="tissue specificity">
    <text evidence="5 6">Expressed at low levels in roots, shoots, pedicels and inflorescence stems, flowers, sepals, stigmas and anther filaments.</text>
</comment>
<comment type="induction">
    <text evidence="6 7">Up-regulated in roots and shoots by iron deficiency and copper deficiency (PubMed:16362328). Induced by copper deficiency in a SPL7-dependent manner (PubMed:22374396).</text>
</comment>
<comment type="similarity">
    <text evidence="8">Belongs to the ferric reductase (FRE) family.</text>
</comment>
<sequence length="707" mass="81166">MGNMRSLVKMLMVVLFLGWIFVWIMISTNRFQNIWTPKLAKYLKTTYFGPQGMNLVLLTVPMMFIAVLSCVYLHTQKQPSQTQSLYKCREWKVKGRMGRVMMVMNPLGIVTATELTFSLLFLALLVWALSNYLYLSYHVHLHNHDNANDMCRWQAKFRAFGLRIGYVGHYCWAFLFFPVTRASTILPLVGLTSESSIKYHIWLGHVSNFCFLVHTVVFLIYWAMVNKLMETFAWNATYVPNLAGTIAMVIGIAIWVTSLPSFRRKKFEIFFYTHHLYGLYIVFYAIHVGDSWFCMILPNIFLFFIDRYLRFLQSTKRSRLVSAKILPSDNLELTFAKTSGLHYTPTSILFLHVPSISKLQWHPFTITSSSNLEKDTLSVVIRKQGSWTQKLYTHLSSSIDSLEVSTEGPYGPNSFDVSRHDSLILVGGGSGVTPFISVIRELIFQSQNRSTKLPNVLLVCAFKNYHDLAFLDLIFPSDISVSDISKLNLRIEAYITREDKKPETTDDHKLLQTKWFKPQPLDSPISPVLGPNNFLWLGVVILSSFVMFLLLIGIVTRYYIYPVDHNTGSIYNFTYRVLWVMFLGCVCIFISSSIIFLWRKKENKEGDKDSKKQVQSVEFQTPTSSPGSWFHGHERELESVPYQSIVQATSVHFGSKPNLKKILFEAEGSEDVGVMVCGPKKMRHEVAKICSSGLAKNLHFEAISFNW</sequence>
<feature type="chain" id="PRO_0000413203" description="Ferric reduction oxidase 5">
    <location>
        <begin position="1"/>
        <end position="707"/>
    </location>
</feature>
<feature type="topological domain" description="Cytoplasmic" evidence="2">
    <location>
        <begin position="1"/>
        <end position="9"/>
    </location>
</feature>
<feature type="transmembrane region" description="Helical" evidence="1">
    <location>
        <begin position="10"/>
        <end position="29"/>
    </location>
</feature>
<feature type="topological domain" description="Extracellular" evidence="2">
    <location>
        <begin position="30"/>
        <end position="54"/>
    </location>
</feature>
<feature type="transmembrane region" description="Helical" evidence="1">
    <location>
        <begin position="55"/>
        <end position="73"/>
    </location>
</feature>
<feature type="topological domain" description="Cytoplasmic" evidence="2">
    <location>
        <begin position="74"/>
        <end position="106"/>
    </location>
</feature>
<feature type="transmembrane region" description="Helical" evidence="1">
    <location>
        <begin position="107"/>
        <end position="130"/>
    </location>
</feature>
<feature type="topological domain" description="Extracellular" evidence="2">
    <location>
        <begin position="131"/>
        <end position="198"/>
    </location>
</feature>
<feature type="transmembrane region" description="Helical" evidence="1">
    <location>
        <begin position="199"/>
        <end position="222"/>
    </location>
</feature>
<feature type="topological domain" description="Cytoplasmic" evidence="2">
    <location>
        <begin position="223"/>
        <end position="272"/>
    </location>
</feature>
<feature type="transmembrane region" description="Helical" evidence="1">
    <location>
        <begin position="273"/>
        <end position="297"/>
    </location>
</feature>
<feature type="topological domain" description="Extracellular" evidence="2">
    <location>
        <begin position="298"/>
        <end position="319"/>
    </location>
</feature>
<feature type="transmembrane region" description="Helical" evidence="1">
    <location>
        <begin position="320"/>
        <end position="340"/>
    </location>
</feature>
<feature type="topological domain" description="Cytoplasmic" evidence="2">
    <location>
        <begin position="341"/>
        <end position="533"/>
    </location>
</feature>
<feature type="transmembrane region" description="Helical" evidence="1">
    <location>
        <begin position="534"/>
        <end position="556"/>
    </location>
</feature>
<feature type="topological domain" description="Extracellular" evidence="2">
    <location>
        <begin position="557"/>
        <end position="576"/>
    </location>
</feature>
<feature type="transmembrane region" description="Helical" evidence="1">
    <location>
        <begin position="577"/>
        <end position="598"/>
    </location>
</feature>
<feature type="topological domain" description="Cytoplasmic" evidence="2">
    <location>
        <begin position="599"/>
        <end position="707"/>
    </location>
</feature>
<feature type="domain" description="Ferric oxidoreductase">
    <location>
        <begin position="165"/>
        <end position="284"/>
    </location>
</feature>
<feature type="domain" description="FAD-binding FR-type" evidence="3">
    <location>
        <begin position="313"/>
        <end position="416"/>
    </location>
</feature>
<feature type="region of interest" description="Disordered" evidence="4">
    <location>
        <begin position="608"/>
        <end position="630"/>
    </location>
</feature>
<feature type="compositionally biased region" description="Polar residues" evidence="4">
    <location>
        <begin position="613"/>
        <end position="627"/>
    </location>
</feature>
<feature type="binding site" description="axial binding residue" evidence="2">
    <location>
        <position position="200"/>
    </location>
    <ligand>
        <name>heme</name>
        <dbReference type="ChEBI" id="CHEBI:30413"/>
    </ligand>
    <ligandPart>
        <name>Fe</name>
        <dbReference type="ChEBI" id="CHEBI:18248"/>
    </ligandPart>
</feature>
<feature type="binding site" description="axial binding residue" evidence="2">
    <location>
        <position position="214"/>
    </location>
    <ligand>
        <name>heme</name>
        <dbReference type="ChEBI" id="CHEBI:30413"/>
    </ligand>
    <ligandPart>
        <name>Fe</name>
        <dbReference type="ChEBI" id="CHEBI:18248"/>
    </ligandPart>
</feature>
<feature type="binding site" description="axial binding residue" evidence="2">
    <location>
        <position position="274"/>
    </location>
    <ligand>
        <name>heme</name>
        <dbReference type="ChEBI" id="CHEBI:30413"/>
    </ligand>
    <ligandPart>
        <name>Fe</name>
        <dbReference type="ChEBI" id="CHEBI:18248"/>
    </ligandPart>
</feature>
<feature type="binding site" description="axial binding residue" evidence="2">
    <location>
        <position position="287"/>
    </location>
    <ligand>
        <name>heme</name>
        <dbReference type="ChEBI" id="CHEBI:30413"/>
    </ligand>
    <ligandPart>
        <name>Fe</name>
        <dbReference type="ChEBI" id="CHEBI:18248"/>
    </ligandPart>
</feature>
<feature type="binding site" evidence="2">
    <location>
        <begin position="362"/>
        <end position="365"/>
    </location>
    <ligand>
        <name>FAD</name>
        <dbReference type="ChEBI" id="CHEBI:57692"/>
    </ligand>
</feature>
<feature type="binding site" evidence="2">
    <location>
        <begin position="408"/>
        <end position="411"/>
    </location>
    <ligand>
        <name>NAD(+)</name>
        <dbReference type="ChEBI" id="CHEBI:57540"/>
    </ligand>
</feature>
<feature type="splice variant" id="VSP_041874" description="In isoform 2." evidence="8">
    <original>YLKTTYFGPQGMNLVLLTVPMMFIAVLSCVYLHTQKQPSQTQSLYKCREWKVKGRMGRVMMVMNPLGIVTATELTFSLLFLALLVWALSNYLYLSYHVHLHNHDNANDMCRWQ</original>
    <variation>HESCATHGSNDVHCGSELCLFAYPKATLPNSKRMEGKRENGEGDDGYEPIGDSDSHRVDFFSV</variation>
    <location>
        <begin position="42"/>
        <end position="154"/>
    </location>
</feature>
<reference key="1">
    <citation type="journal article" date="2005" name="Plant Cell Physiol.">
        <title>Molecular and biochemical characterization of the Fe(III) chelate reductase gene family in Arabidopsis thaliana.</title>
        <authorList>
            <person name="Wu H."/>
            <person name="Li L."/>
            <person name="Du J."/>
            <person name="Yuan Y."/>
            <person name="Cheng X."/>
            <person name="Ling H.Q."/>
        </authorList>
    </citation>
    <scope>NUCLEOTIDE SEQUENCE [MRNA]</scope>
    <scope>FUNCTION</scope>
    <scope>TISSUE SPECIFICITY</scope>
</reference>
<reference key="2">
    <citation type="journal article" date="1998" name="DNA Res.">
        <title>Structural analysis of Arabidopsis thaliana chromosome 5. IV. Sequence features of the regions of 1,456,315 bp covered by nineteen physically assigned P1 and TAC clones.</title>
        <authorList>
            <person name="Sato S."/>
            <person name="Kaneko T."/>
            <person name="Kotani H."/>
            <person name="Nakamura Y."/>
            <person name="Asamizu E."/>
            <person name="Miyajima N."/>
            <person name="Tabata S."/>
        </authorList>
    </citation>
    <scope>NUCLEOTIDE SEQUENCE [LARGE SCALE GENOMIC DNA]</scope>
    <source>
        <strain>cv. Columbia</strain>
    </source>
</reference>
<reference key="3">
    <citation type="journal article" date="2017" name="Plant J.">
        <title>Araport11: a complete reannotation of the Arabidopsis thaliana reference genome.</title>
        <authorList>
            <person name="Cheng C.Y."/>
            <person name="Krishnakumar V."/>
            <person name="Chan A.P."/>
            <person name="Thibaud-Nissen F."/>
            <person name="Schobel S."/>
            <person name="Town C.D."/>
        </authorList>
    </citation>
    <scope>GENOME REANNOTATION</scope>
    <source>
        <strain>cv. Columbia</strain>
    </source>
</reference>
<reference key="4">
    <citation type="journal article" date="2006" name="Planta">
        <title>Expression profiling of the Arabidopsis ferric chelate reductase (FRO) gene family reveals differential regulation by iron and copper.</title>
        <authorList>
            <person name="Mukherjee I."/>
            <person name="Campbell N.H."/>
            <person name="Ash J.S."/>
            <person name="Connolly E.L."/>
        </authorList>
    </citation>
    <scope>TISSUE SPECIFICITY</scope>
    <scope>INDUCTION BY IRON AND COPPER</scope>
</reference>
<reference key="5">
    <citation type="journal article" date="2009" name="Plant Sci.">
        <title>Iron uptake mechanisms in plants: Functions of the FRO family of ferric reductases.</title>
        <authorList>
            <person name="Jeong J."/>
            <person name="Connolly E.L."/>
        </authorList>
    </citation>
    <scope>GENE FAMILY</scope>
    <scope>NOMENCLATURE</scope>
</reference>
<reference key="6">
    <citation type="journal article" date="2012" name="Plant Cell">
        <title>Transcriptome sequencing identifies SPL7-regulated copper acquisition genes FRO4/FRO5 and the copper dependence of iron homeostasis in Arabidopsis.</title>
        <authorList>
            <person name="Bernal M."/>
            <person name="Casero D."/>
            <person name="Singh V."/>
            <person name="Wilson G.T."/>
            <person name="Grande A."/>
            <person name="Yang H."/>
            <person name="Dodani S.C."/>
            <person name="Pellegrini M."/>
            <person name="Huijser P."/>
            <person name="Connolly E.L."/>
            <person name="Merchant S.S."/>
            <person name="Kraemer U."/>
        </authorList>
    </citation>
    <scope>FUNCTION</scope>
    <scope>INDUCTION BY COPPER DEFICIENCY</scope>
</reference>
<keyword id="KW-0025">Alternative splicing</keyword>
<keyword id="KW-1003">Cell membrane</keyword>
<keyword id="KW-0249">Electron transport</keyword>
<keyword id="KW-0274">FAD</keyword>
<keyword id="KW-0285">Flavoprotein</keyword>
<keyword id="KW-0349">Heme</keyword>
<keyword id="KW-0406">Ion transport</keyword>
<keyword id="KW-0408">Iron</keyword>
<keyword id="KW-0472">Membrane</keyword>
<keyword id="KW-0479">Metal-binding</keyword>
<keyword id="KW-0520">NAD</keyword>
<keyword id="KW-0560">Oxidoreductase</keyword>
<keyword id="KW-1185">Reference proteome</keyword>
<keyword id="KW-0812">Transmembrane</keyword>
<keyword id="KW-1133">Transmembrane helix</keyword>
<keyword id="KW-0813">Transport</keyword>